<feature type="chain" id="PRO_0000231870" description="Homoserine O-acetyltransferase">
    <location>
        <begin position="1"/>
        <end position="369"/>
    </location>
</feature>
<feature type="domain" description="AB hydrolase-1" evidence="1">
    <location>
        <begin position="44"/>
        <end position="350"/>
    </location>
</feature>
<feature type="active site" description="Nucleophile" evidence="1">
    <location>
        <position position="150"/>
    </location>
</feature>
<feature type="active site" evidence="1">
    <location>
        <position position="311"/>
    </location>
</feature>
<feature type="active site" evidence="1">
    <location>
        <position position="344"/>
    </location>
</feature>
<feature type="binding site" evidence="1">
    <location>
        <position position="217"/>
    </location>
    <ligand>
        <name>substrate</name>
    </ligand>
</feature>
<feature type="binding site" evidence="1">
    <location>
        <position position="345"/>
    </location>
    <ligand>
        <name>substrate</name>
    </ligand>
</feature>
<reference key="1">
    <citation type="journal article" date="2009" name="BMC Microbiol.">
        <title>The genome sequence of Geobacter metallireducens: features of metabolism, physiology and regulation common and dissimilar to Geobacter sulfurreducens.</title>
        <authorList>
            <person name="Aklujkar M."/>
            <person name="Krushkal J."/>
            <person name="DiBartolo G."/>
            <person name="Lapidus A."/>
            <person name="Land M.L."/>
            <person name="Lovley D.R."/>
        </authorList>
    </citation>
    <scope>NUCLEOTIDE SEQUENCE [LARGE SCALE GENOMIC DNA]</scope>
    <source>
        <strain>ATCC 53774 / DSM 7210 / GS-15</strain>
    </source>
</reference>
<name>METXA_GEOMG</name>
<proteinExistence type="inferred from homology"/>
<organism>
    <name type="scientific">Geobacter metallireducens (strain ATCC 53774 / DSM 7210 / GS-15)</name>
    <dbReference type="NCBI Taxonomy" id="269799"/>
    <lineage>
        <taxon>Bacteria</taxon>
        <taxon>Pseudomonadati</taxon>
        <taxon>Thermodesulfobacteriota</taxon>
        <taxon>Desulfuromonadia</taxon>
        <taxon>Geobacterales</taxon>
        <taxon>Geobacteraceae</taxon>
        <taxon>Geobacter</taxon>
    </lineage>
</organism>
<protein>
    <recommendedName>
        <fullName evidence="1">Homoserine O-acetyltransferase</fullName>
        <shortName evidence="1">HAT</shortName>
        <ecNumber evidence="1">2.3.1.31</ecNumber>
    </recommendedName>
    <alternativeName>
        <fullName evidence="1">Homoserine transacetylase</fullName>
        <shortName evidence="1">HTA</shortName>
    </alternativeName>
</protein>
<gene>
    <name evidence="1" type="primary">metXA</name>
    <name type="ordered locus">Gmet_2783</name>
</gene>
<accession>Q39RX3</accession>
<dbReference type="EC" id="2.3.1.31" evidence="1"/>
<dbReference type="EMBL" id="CP000148">
    <property type="protein sequence ID" value="ABB33001.1"/>
    <property type="molecule type" value="Genomic_DNA"/>
</dbReference>
<dbReference type="SMR" id="Q39RX3"/>
<dbReference type="STRING" id="269799.Gmet_2783"/>
<dbReference type="ESTHER" id="geomg-metx">
    <property type="family name" value="Homoserine_transacetylase"/>
</dbReference>
<dbReference type="KEGG" id="gme:Gmet_2783"/>
<dbReference type="eggNOG" id="COG2021">
    <property type="taxonomic scope" value="Bacteria"/>
</dbReference>
<dbReference type="HOGENOM" id="CLU_028760_1_2_7"/>
<dbReference type="UniPathway" id="UPA00051">
    <property type="reaction ID" value="UER00074"/>
</dbReference>
<dbReference type="Proteomes" id="UP000007073">
    <property type="component" value="Chromosome"/>
</dbReference>
<dbReference type="GO" id="GO:0005737">
    <property type="term" value="C:cytoplasm"/>
    <property type="evidence" value="ECO:0007669"/>
    <property type="project" value="UniProtKB-SubCell"/>
</dbReference>
<dbReference type="GO" id="GO:0004414">
    <property type="term" value="F:homoserine O-acetyltransferase activity"/>
    <property type="evidence" value="ECO:0007669"/>
    <property type="project" value="UniProtKB-UniRule"/>
</dbReference>
<dbReference type="GO" id="GO:0009092">
    <property type="term" value="P:homoserine metabolic process"/>
    <property type="evidence" value="ECO:0007669"/>
    <property type="project" value="TreeGrafter"/>
</dbReference>
<dbReference type="GO" id="GO:0009086">
    <property type="term" value="P:methionine biosynthetic process"/>
    <property type="evidence" value="ECO:0007669"/>
    <property type="project" value="UniProtKB-UniRule"/>
</dbReference>
<dbReference type="FunFam" id="1.10.1740.110:FF:000001">
    <property type="entry name" value="Homoserine O-acetyltransferase"/>
    <property type="match status" value="1"/>
</dbReference>
<dbReference type="Gene3D" id="1.10.1740.110">
    <property type="match status" value="1"/>
</dbReference>
<dbReference type="Gene3D" id="3.40.50.1820">
    <property type="entry name" value="alpha/beta hydrolase"/>
    <property type="match status" value="1"/>
</dbReference>
<dbReference type="HAMAP" id="MF_00296">
    <property type="entry name" value="MetX_acyltransf"/>
    <property type="match status" value="1"/>
</dbReference>
<dbReference type="InterPro" id="IPR000073">
    <property type="entry name" value="AB_hydrolase_1"/>
</dbReference>
<dbReference type="InterPro" id="IPR029058">
    <property type="entry name" value="AB_hydrolase_fold"/>
</dbReference>
<dbReference type="InterPro" id="IPR008220">
    <property type="entry name" value="HAT_MetX-like"/>
</dbReference>
<dbReference type="NCBIfam" id="TIGR01392">
    <property type="entry name" value="homoserO_Ac_trn"/>
    <property type="match status" value="1"/>
</dbReference>
<dbReference type="NCBIfam" id="NF001209">
    <property type="entry name" value="PRK00175.1"/>
    <property type="match status" value="1"/>
</dbReference>
<dbReference type="PANTHER" id="PTHR32268">
    <property type="entry name" value="HOMOSERINE O-ACETYLTRANSFERASE"/>
    <property type="match status" value="1"/>
</dbReference>
<dbReference type="PANTHER" id="PTHR32268:SF11">
    <property type="entry name" value="HOMOSERINE O-ACETYLTRANSFERASE"/>
    <property type="match status" value="1"/>
</dbReference>
<dbReference type="Pfam" id="PF00561">
    <property type="entry name" value="Abhydrolase_1"/>
    <property type="match status" value="1"/>
</dbReference>
<dbReference type="PIRSF" id="PIRSF000443">
    <property type="entry name" value="Homoser_Ac_trans"/>
    <property type="match status" value="1"/>
</dbReference>
<dbReference type="SUPFAM" id="SSF53474">
    <property type="entry name" value="alpha/beta-Hydrolases"/>
    <property type="match status" value="1"/>
</dbReference>
<comment type="function">
    <text evidence="1">Transfers an acetyl group from acetyl-CoA to L-homoserine, forming acetyl-L-homoserine.</text>
</comment>
<comment type="catalytic activity">
    <reaction evidence="1">
        <text>L-homoserine + acetyl-CoA = O-acetyl-L-homoserine + CoA</text>
        <dbReference type="Rhea" id="RHEA:13701"/>
        <dbReference type="ChEBI" id="CHEBI:57287"/>
        <dbReference type="ChEBI" id="CHEBI:57288"/>
        <dbReference type="ChEBI" id="CHEBI:57476"/>
        <dbReference type="ChEBI" id="CHEBI:57716"/>
        <dbReference type="EC" id="2.3.1.31"/>
    </reaction>
</comment>
<comment type="pathway">
    <text evidence="1">Amino-acid biosynthesis; L-methionine biosynthesis via de novo pathway; O-acetyl-L-homoserine from L-homoserine: step 1/1.</text>
</comment>
<comment type="subunit">
    <text evidence="1">Homodimer.</text>
</comment>
<comment type="subcellular location">
    <subcellularLocation>
        <location evidence="1">Cytoplasm</location>
    </subcellularLocation>
</comment>
<comment type="similarity">
    <text evidence="1">Belongs to the AB hydrolase superfamily. MetX family.</text>
</comment>
<sequence>MSVGIVQEQSVTFDTELRLESGRILGPITLAYETYGELNADRSNAILVAHAWTGNAHLAGKNSEEDTKPGWWDAIVGPGRLLDTDRCFVICSNVIGSCYGSTGPASINPKTGKRYNLTFPVITVRDMVRAQALLLDHLGIDRLLTVLGGSMGGMQALEWATQFPDRIRSAIALATTSRPSPQAISLNAVARWAIFNDPTWKKGEYRKNPKDGLALARGIGHITFLSDESMWQKFGRRFNARDGLFDFFGQFEVERYLSYNGYNFVDRFDTNSFLYLAKALDLYDTAWGYESLEEAFSRVKAPIQFFAFTSDWLYPPYQTEEMATILRSLGKPVEYHLIESAYGHDAFLLEHETFAPMVREFLDKVERSE</sequence>
<keyword id="KW-0012">Acyltransferase</keyword>
<keyword id="KW-0028">Amino-acid biosynthesis</keyword>
<keyword id="KW-0963">Cytoplasm</keyword>
<keyword id="KW-0486">Methionine biosynthesis</keyword>
<keyword id="KW-1185">Reference proteome</keyword>
<keyword id="KW-0808">Transferase</keyword>
<evidence type="ECO:0000255" key="1">
    <source>
        <dbReference type="HAMAP-Rule" id="MF_00296"/>
    </source>
</evidence>